<reference key="1">
    <citation type="submission" date="2008-03" db="EMBL/GenBank/DDBJ databases">
        <title>Complete sequence of Leptothrix cholodnii SP-6.</title>
        <authorList>
            <consortium name="US DOE Joint Genome Institute"/>
            <person name="Copeland A."/>
            <person name="Lucas S."/>
            <person name="Lapidus A."/>
            <person name="Glavina del Rio T."/>
            <person name="Dalin E."/>
            <person name="Tice H."/>
            <person name="Bruce D."/>
            <person name="Goodwin L."/>
            <person name="Pitluck S."/>
            <person name="Chertkov O."/>
            <person name="Brettin T."/>
            <person name="Detter J.C."/>
            <person name="Han C."/>
            <person name="Kuske C.R."/>
            <person name="Schmutz J."/>
            <person name="Larimer F."/>
            <person name="Land M."/>
            <person name="Hauser L."/>
            <person name="Kyrpides N."/>
            <person name="Lykidis A."/>
            <person name="Emerson D."/>
            <person name="Richardson P."/>
        </authorList>
    </citation>
    <scope>NUCLEOTIDE SEQUENCE [LARGE SCALE GENOMIC DNA]</scope>
    <source>
        <strain>ATCC 51168 / LMG 8142 / SP-6</strain>
    </source>
</reference>
<name>PGK_LEPCP</name>
<feature type="chain" id="PRO_1000096355" description="Phosphoglycerate kinase">
    <location>
        <begin position="1"/>
        <end position="397"/>
    </location>
</feature>
<feature type="binding site" evidence="1">
    <location>
        <begin position="25"/>
        <end position="27"/>
    </location>
    <ligand>
        <name>substrate</name>
    </ligand>
</feature>
<feature type="binding site" evidence="1">
    <location>
        <position position="41"/>
    </location>
    <ligand>
        <name>substrate</name>
    </ligand>
</feature>
<feature type="binding site" evidence="1">
    <location>
        <begin position="64"/>
        <end position="67"/>
    </location>
    <ligand>
        <name>substrate</name>
    </ligand>
</feature>
<feature type="binding site" evidence="1">
    <location>
        <position position="118"/>
    </location>
    <ligand>
        <name>substrate</name>
    </ligand>
</feature>
<feature type="binding site" evidence="1">
    <location>
        <position position="151"/>
    </location>
    <ligand>
        <name>substrate</name>
    </ligand>
</feature>
<feature type="binding site" evidence="1">
    <location>
        <position position="202"/>
    </location>
    <ligand>
        <name>ATP</name>
        <dbReference type="ChEBI" id="CHEBI:30616"/>
    </ligand>
</feature>
<feature type="binding site" evidence="1">
    <location>
        <position position="324"/>
    </location>
    <ligand>
        <name>ATP</name>
        <dbReference type="ChEBI" id="CHEBI:30616"/>
    </ligand>
</feature>
<feature type="binding site" evidence="1">
    <location>
        <begin position="350"/>
        <end position="353"/>
    </location>
    <ligand>
        <name>ATP</name>
        <dbReference type="ChEBI" id="CHEBI:30616"/>
    </ligand>
</feature>
<dbReference type="EC" id="2.7.2.3" evidence="1"/>
<dbReference type="EMBL" id="CP001013">
    <property type="protein sequence ID" value="ACB32630.1"/>
    <property type="molecule type" value="Genomic_DNA"/>
</dbReference>
<dbReference type="RefSeq" id="WP_012345392.1">
    <property type="nucleotide sequence ID" value="NC_010524.1"/>
</dbReference>
<dbReference type="SMR" id="B1XWA3"/>
<dbReference type="STRING" id="395495.Lcho_0355"/>
<dbReference type="KEGG" id="lch:Lcho_0355"/>
<dbReference type="eggNOG" id="COG0126">
    <property type="taxonomic scope" value="Bacteria"/>
</dbReference>
<dbReference type="HOGENOM" id="CLU_025427_0_2_4"/>
<dbReference type="OrthoDB" id="9808460at2"/>
<dbReference type="UniPathway" id="UPA00109">
    <property type="reaction ID" value="UER00185"/>
</dbReference>
<dbReference type="Proteomes" id="UP000001693">
    <property type="component" value="Chromosome"/>
</dbReference>
<dbReference type="GO" id="GO:0005829">
    <property type="term" value="C:cytosol"/>
    <property type="evidence" value="ECO:0007669"/>
    <property type="project" value="TreeGrafter"/>
</dbReference>
<dbReference type="GO" id="GO:0043531">
    <property type="term" value="F:ADP binding"/>
    <property type="evidence" value="ECO:0007669"/>
    <property type="project" value="TreeGrafter"/>
</dbReference>
<dbReference type="GO" id="GO:0005524">
    <property type="term" value="F:ATP binding"/>
    <property type="evidence" value="ECO:0007669"/>
    <property type="project" value="UniProtKB-KW"/>
</dbReference>
<dbReference type="GO" id="GO:0004618">
    <property type="term" value="F:phosphoglycerate kinase activity"/>
    <property type="evidence" value="ECO:0007669"/>
    <property type="project" value="UniProtKB-UniRule"/>
</dbReference>
<dbReference type="GO" id="GO:0006094">
    <property type="term" value="P:gluconeogenesis"/>
    <property type="evidence" value="ECO:0007669"/>
    <property type="project" value="TreeGrafter"/>
</dbReference>
<dbReference type="GO" id="GO:0006096">
    <property type="term" value="P:glycolytic process"/>
    <property type="evidence" value="ECO:0007669"/>
    <property type="project" value="UniProtKB-UniRule"/>
</dbReference>
<dbReference type="FunFam" id="3.40.50.1260:FF:000001">
    <property type="entry name" value="Phosphoglycerate kinase"/>
    <property type="match status" value="1"/>
</dbReference>
<dbReference type="FunFam" id="3.40.50.1260:FF:000002">
    <property type="entry name" value="Phosphoglycerate kinase"/>
    <property type="match status" value="1"/>
</dbReference>
<dbReference type="Gene3D" id="3.40.50.1260">
    <property type="entry name" value="Phosphoglycerate kinase, N-terminal domain"/>
    <property type="match status" value="2"/>
</dbReference>
<dbReference type="HAMAP" id="MF_00145">
    <property type="entry name" value="Phosphoglyc_kinase"/>
    <property type="match status" value="1"/>
</dbReference>
<dbReference type="InterPro" id="IPR001576">
    <property type="entry name" value="Phosphoglycerate_kinase"/>
</dbReference>
<dbReference type="InterPro" id="IPR015911">
    <property type="entry name" value="Phosphoglycerate_kinase_CS"/>
</dbReference>
<dbReference type="InterPro" id="IPR015824">
    <property type="entry name" value="Phosphoglycerate_kinase_N"/>
</dbReference>
<dbReference type="InterPro" id="IPR036043">
    <property type="entry name" value="Phosphoglycerate_kinase_sf"/>
</dbReference>
<dbReference type="PANTHER" id="PTHR11406">
    <property type="entry name" value="PHOSPHOGLYCERATE KINASE"/>
    <property type="match status" value="1"/>
</dbReference>
<dbReference type="PANTHER" id="PTHR11406:SF23">
    <property type="entry name" value="PHOSPHOGLYCERATE KINASE 1, CHLOROPLASTIC-RELATED"/>
    <property type="match status" value="1"/>
</dbReference>
<dbReference type="Pfam" id="PF00162">
    <property type="entry name" value="PGK"/>
    <property type="match status" value="1"/>
</dbReference>
<dbReference type="PIRSF" id="PIRSF000724">
    <property type="entry name" value="Pgk"/>
    <property type="match status" value="1"/>
</dbReference>
<dbReference type="PRINTS" id="PR00477">
    <property type="entry name" value="PHGLYCKINASE"/>
</dbReference>
<dbReference type="SUPFAM" id="SSF53748">
    <property type="entry name" value="Phosphoglycerate kinase"/>
    <property type="match status" value="1"/>
</dbReference>
<dbReference type="PROSITE" id="PS00111">
    <property type="entry name" value="PGLYCERATE_KINASE"/>
    <property type="match status" value="1"/>
</dbReference>
<proteinExistence type="inferred from homology"/>
<keyword id="KW-0067">ATP-binding</keyword>
<keyword id="KW-0963">Cytoplasm</keyword>
<keyword id="KW-0324">Glycolysis</keyword>
<keyword id="KW-0418">Kinase</keyword>
<keyword id="KW-0547">Nucleotide-binding</keyword>
<keyword id="KW-1185">Reference proteome</keyword>
<keyword id="KW-0808">Transferase</keyword>
<accession>B1XWA3</accession>
<sequence length="397" mass="40939">MKILRLQDLIAAGQVAGQRVFIRADLNVPQDDAGHITEDTRIRASIPCIEMALKAGAAVMVTSHLGRPTEGEFKPEDSLAPVAARMGELMGREIPVIANWTDGVEVAPGQLVMLENCRLNKGEKKNNEALAQKMAALCDIFVHDAFGTAHRAEASTYGIAQFAKIACAGPLLAAEIDAISLALANPKRPLVAIVAGSKVSTKLTILKALSANVDGLIVGGGIANTFLLAAGLSIGKSLAEPDLVGEARAVIDAMKARGAAVPIPVDVVCAKTFSPTAEATVKAATDVADDDLILDIGPQTAAILAAQLKAAGTIVWNGPVGVFEFDAFAHGTETLARAIAESDAFSIAGGGDTLAAIAKYGIEKDVGYISTGGGAFLEVLEGKTLPAFEILTKRAAG</sequence>
<gene>
    <name evidence="1" type="primary">pgk</name>
    <name type="ordered locus">Lcho_0355</name>
</gene>
<evidence type="ECO:0000255" key="1">
    <source>
        <dbReference type="HAMAP-Rule" id="MF_00145"/>
    </source>
</evidence>
<organism>
    <name type="scientific">Leptothrix cholodnii (strain ATCC 51168 / LMG 8142 / SP-6)</name>
    <name type="common">Leptothrix discophora (strain SP-6)</name>
    <dbReference type="NCBI Taxonomy" id="395495"/>
    <lineage>
        <taxon>Bacteria</taxon>
        <taxon>Pseudomonadati</taxon>
        <taxon>Pseudomonadota</taxon>
        <taxon>Betaproteobacteria</taxon>
        <taxon>Burkholderiales</taxon>
        <taxon>Sphaerotilaceae</taxon>
        <taxon>Leptothrix</taxon>
    </lineage>
</organism>
<protein>
    <recommendedName>
        <fullName evidence="1">Phosphoglycerate kinase</fullName>
        <ecNumber evidence="1">2.7.2.3</ecNumber>
    </recommendedName>
</protein>
<comment type="catalytic activity">
    <reaction evidence="1">
        <text>(2R)-3-phosphoglycerate + ATP = (2R)-3-phospho-glyceroyl phosphate + ADP</text>
        <dbReference type="Rhea" id="RHEA:14801"/>
        <dbReference type="ChEBI" id="CHEBI:30616"/>
        <dbReference type="ChEBI" id="CHEBI:57604"/>
        <dbReference type="ChEBI" id="CHEBI:58272"/>
        <dbReference type="ChEBI" id="CHEBI:456216"/>
        <dbReference type="EC" id="2.7.2.3"/>
    </reaction>
</comment>
<comment type="pathway">
    <text evidence="1">Carbohydrate degradation; glycolysis; pyruvate from D-glyceraldehyde 3-phosphate: step 2/5.</text>
</comment>
<comment type="subunit">
    <text evidence="1">Monomer.</text>
</comment>
<comment type="subcellular location">
    <subcellularLocation>
        <location evidence="1">Cytoplasm</location>
    </subcellularLocation>
</comment>
<comment type="similarity">
    <text evidence="1">Belongs to the phosphoglycerate kinase family.</text>
</comment>